<accession>P30333</accession>
<evidence type="ECO:0000255" key="1"/>
<evidence type="ECO:0000256" key="2">
    <source>
        <dbReference type="SAM" id="MobiDB-lite"/>
    </source>
</evidence>
<evidence type="ECO:0000305" key="3"/>
<gene>
    <name type="primary">rpoN2</name>
    <name type="ordered locus">blr0723</name>
</gene>
<keyword id="KW-0238">DNA-binding</keyword>
<keyword id="KW-0240">DNA-directed RNA polymerase</keyword>
<keyword id="KW-0535">Nitrogen fixation</keyword>
<keyword id="KW-0548">Nucleotidyltransferase</keyword>
<keyword id="KW-1185">Reference proteome</keyword>
<keyword id="KW-0731">Sigma factor</keyword>
<keyword id="KW-0804">Transcription</keyword>
<keyword id="KW-0805">Transcription regulation</keyword>
<keyword id="KW-0808">Transferase</keyword>
<dbReference type="EMBL" id="M59243">
    <property type="protein sequence ID" value="AAA26241.1"/>
    <property type="molecule type" value="Genomic_DNA"/>
</dbReference>
<dbReference type="EMBL" id="BA000040">
    <property type="protein sequence ID" value="BAC45988.1"/>
    <property type="molecule type" value="Genomic_DNA"/>
</dbReference>
<dbReference type="PIR" id="B38179">
    <property type="entry name" value="B38179"/>
</dbReference>
<dbReference type="RefSeq" id="NP_767363.1">
    <property type="nucleotide sequence ID" value="NC_004463.1"/>
</dbReference>
<dbReference type="RefSeq" id="WP_011083548.1">
    <property type="nucleotide sequence ID" value="NC_004463.1"/>
</dbReference>
<dbReference type="SMR" id="P30333"/>
<dbReference type="FunCoup" id="P30333">
    <property type="interactions" value="314"/>
</dbReference>
<dbReference type="STRING" id="224911.AAV28_00460"/>
<dbReference type="EnsemblBacteria" id="BAC45988">
    <property type="protein sequence ID" value="BAC45988"/>
    <property type="gene ID" value="BAC45988"/>
</dbReference>
<dbReference type="GeneID" id="46487998"/>
<dbReference type="KEGG" id="bja:blr0723"/>
<dbReference type="PATRIC" id="fig|224911.44.peg.95"/>
<dbReference type="eggNOG" id="COG1508">
    <property type="taxonomic scope" value="Bacteria"/>
</dbReference>
<dbReference type="HOGENOM" id="CLU_020569_0_0_5"/>
<dbReference type="InParanoid" id="P30333"/>
<dbReference type="OrthoDB" id="9814402at2"/>
<dbReference type="PhylomeDB" id="P30333"/>
<dbReference type="Proteomes" id="UP000002526">
    <property type="component" value="Chromosome"/>
</dbReference>
<dbReference type="GO" id="GO:0000428">
    <property type="term" value="C:DNA-directed RNA polymerase complex"/>
    <property type="evidence" value="ECO:0007669"/>
    <property type="project" value="UniProtKB-KW"/>
</dbReference>
<dbReference type="GO" id="GO:0032993">
    <property type="term" value="C:protein-DNA complex"/>
    <property type="evidence" value="ECO:0000318"/>
    <property type="project" value="GO_Central"/>
</dbReference>
<dbReference type="GO" id="GO:0001216">
    <property type="term" value="F:DNA-binding transcription activator activity"/>
    <property type="evidence" value="ECO:0000318"/>
    <property type="project" value="GO_Central"/>
</dbReference>
<dbReference type="GO" id="GO:0016779">
    <property type="term" value="F:nucleotidyltransferase activity"/>
    <property type="evidence" value="ECO:0007669"/>
    <property type="project" value="UniProtKB-KW"/>
</dbReference>
<dbReference type="GO" id="GO:0016987">
    <property type="term" value="F:sigma factor activity"/>
    <property type="evidence" value="ECO:0007669"/>
    <property type="project" value="UniProtKB-KW"/>
</dbReference>
<dbReference type="GO" id="GO:0000976">
    <property type="term" value="F:transcription cis-regulatory region binding"/>
    <property type="evidence" value="ECO:0000318"/>
    <property type="project" value="GO_Central"/>
</dbReference>
<dbReference type="GO" id="GO:0006352">
    <property type="term" value="P:DNA-templated transcription initiation"/>
    <property type="evidence" value="ECO:0007669"/>
    <property type="project" value="InterPro"/>
</dbReference>
<dbReference type="GO" id="GO:0009399">
    <property type="term" value="P:nitrogen fixation"/>
    <property type="evidence" value="ECO:0007669"/>
    <property type="project" value="UniProtKB-KW"/>
</dbReference>
<dbReference type="GO" id="GO:0006355">
    <property type="term" value="P:regulation of DNA-templated transcription"/>
    <property type="evidence" value="ECO:0000318"/>
    <property type="project" value="GO_Central"/>
</dbReference>
<dbReference type="Gene3D" id="1.10.10.60">
    <property type="entry name" value="Homeodomain-like"/>
    <property type="match status" value="1"/>
</dbReference>
<dbReference type="Gene3D" id="1.10.10.1330">
    <property type="entry name" value="RNA polymerase sigma-54 factor, core-binding domain"/>
    <property type="match status" value="1"/>
</dbReference>
<dbReference type="InterPro" id="IPR000394">
    <property type="entry name" value="RNA_pol_sigma_54"/>
</dbReference>
<dbReference type="InterPro" id="IPR007046">
    <property type="entry name" value="RNA_pol_sigma_54_core-bd"/>
</dbReference>
<dbReference type="InterPro" id="IPR007634">
    <property type="entry name" value="RNA_pol_sigma_54_DNA-bd"/>
</dbReference>
<dbReference type="InterPro" id="IPR038709">
    <property type="entry name" value="RpoN_core-bd_sf"/>
</dbReference>
<dbReference type="NCBIfam" id="NF004596">
    <property type="entry name" value="PRK05932.1-3"/>
    <property type="match status" value="1"/>
</dbReference>
<dbReference type="NCBIfam" id="NF009118">
    <property type="entry name" value="PRK12469.1"/>
    <property type="match status" value="1"/>
</dbReference>
<dbReference type="NCBIfam" id="TIGR02395">
    <property type="entry name" value="rpoN_sigma"/>
    <property type="match status" value="1"/>
</dbReference>
<dbReference type="PANTHER" id="PTHR32248">
    <property type="entry name" value="RNA POLYMERASE SIGMA-54 FACTOR"/>
    <property type="match status" value="1"/>
</dbReference>
<dbReference type="PANTHER" id="PTHR32248:SF4">
    <property type="entry name" value="RNA POLYMERASE SIGMA-54 FACTOR"/>
    <property type="match status" value="1"/>
</dbReference>
<dbReference type="Pfam" id="PF00309">
    <property type="entry name" value="Sigma54_AID"/>
    <property type="match status" value="1"/>
</dbReference>
<dbReference type="Pfam" id="PF04963">
    <property type="entry name" value="Sigma54_CBD"/>
    <property type="match status" value="1"/>
</dbReference>
<dbReference type="Pfam" id="PF04552">
    <property type="entry name" value="Sigma54_DBD"/>
    <property type="match status" value="1"/>
</dbReference>
<dbReference type="PIRSF" id="PIRSF000774">
    <property type="entry name" value="RpoN"/>
    <property type="match status" value="1"/>
</dbReference>
<dbReference type="PRINTS" id="PR00045">
    <property type="entry name" value="SIGMA54FCT"/>
</dbReference>
<dbReference type="PROSITE" id="PS00717">
    <property type="entry name" value="SIGMA54_1"/>
    <property type="match status" value="1"/>
</dbReference>
<dbReference type="PROSITE" id="PS00718">
    <property type="entry name" value="SIGMA54_2"/>
    <property type="match status" value="1"/>
</dbReference>
<dbReference type="PROSITE" id="PS50044">
    <property type="entry name" value="SIGMA54_3"/>
    <property type="match status" value="1"/>
</dbReference>
<feature type="chain" id="PRO_0000205525" description="RNA polymerase sigma-54 factor 2">
    <location>
        <begin position="1"/>
        <end position="537"/>
    </location>
</feature>
<feature type="DNA-binding region" description="H-T-H motif" evidence="1">
    <location>
        <begin position="403"/>
        <end position="422"/>
    </location>
</feature>
<feature type="region of interest" description="Disordered" evidence="2">
    <location>
        <begin position="52"/>
        <end position="90"/>
    </location>
</feature>
<feature type="region of interest" description="Disordered" evidence="2">
    <location>
        <begin position="507"/>
        <end position="537"/>
    </location>
</feature>
<feature type="short sequence motif" description="RPON box">
    <location>
        <begin position="492"/>
        <end position="500"/>
    </location>
</feature>
<feature type="compositionally biased region" description="Low complexity" evidence="2">
    <location>
        <begin position="55"/>
        <end position="66"/>
    </location>
</feature>
<feature type="compositionally biased region" description="Polar residues" evidence="2">
    <location>
        <begin position="518"/>
        <end position="528"/>
    </location>
</feature>
<name>RP55_BRADU</name>
<reference key="1">
    <citation type="journal article" date="1991" name="J. Bacteriol.">
        <title>Bradyrhizobium japonicum has two differentially regulated, functional homologs of the sigma 54 gene (rpoN).</title>
        <authorList>
            <person name="Kullik I."/>
            <person name="Fritsche S."/>
            <person name="Knobel H."/>
            <person name="Sanjuan J."/>
            <person name="Hennecke H."/>
            <person name="Fischer H.-M."/>
        </authorList>
    </citation>
    <scope>NUCLEOTIDE SEQUENCE [GENOMIC DNA]</scope>
    <source>
        <strain>USDA 110spc4</strain>
    </source>
</reference>
<reference key="2">
    <citation type="journal article" date="2002" name="DNA Res.">
        <title>Complete genomic sequence of nitrogen-fixing symbiotic bacterium Bradyrhizobium japonicum USDA110.</title>
        <authorList>
            <person name="Kaneko T."/>
            <person name="Nakamura Y."/>
            <person name="Sato S."/>
            <person name="Minamisawa K."/>
            <person name="Uchiumi T."/>
            <person name="Sasamoto S."/>
            <person name="Watanabe A."/>
            <person name="Idesawa K."/>
            <person name="Iriguchi M."/>
            <person name="Kawashima K."/>
            <person name="Kohara M."/>
            <person name="Matsumoto M."/>
            <person name="Shimpo S."/>
            <person name="Tsuruoka H."/>
            <person name="Wada T."/>
            <person name="Yamada M."/>
            <person name="Tabata S."/>
        </authorList>
    </citation>
    <scope>NUCLEOTIDE SEQUENCE [LARGE SCALE GENOMIC DNA]</scope>
    <source>
        <strain>JCM 10833 / BCRC 13528 / IAM 13628 / NBRC 14792 / USDA 110</strain>
    </source>
</reference>
<protein>
    <recommendedName>
        <fullName>RNA polymerase sigma-54 factor 2</fullName>
    </recommendedName>
</protein>
<sequence length="537" mass="58832">MALTQRLEFRQSQSLVMTPQLMQAIKLLQLSNLDLTTFVEEELERNPLLERANDEASGGEAPAEAGQFSDSDGGHNDEPGGGPGEAFEPGQEEWMSKDLGTRAEIEQTLDTGLDNVFSEEPAEAAARNAQDAAPTTYTEWGGGASGDEDYNLEAFVAAEVTLGDHLAEQLSVAFTAPAQRMIGQYLIDLVDEAGYLPPDLGQAAERLGASQQEVEDVLAVLQKFDPPGVCARNLSECLAIQLRELDRYDPAMQALVEHLDLLAKRDIAGLRKVCGVDDEDIADMIGEIRRLNPKPGMKFGAARLQTMVPDVYVRPGPDGGWHVELNSDTLPRVLVNQTYYSELSKKIGKDGDKSYFTDALQNATWLVRALDQRARTILKVATEIVRQQDGFFTHGVAHLRPLNLKAVADAIQMHESTVSRVTANKYMATNRGTFELKYFFTASIASADGGEAHSAEAVRHHIKQLIDSEAPAAILSDDTIVERLRASGIDIARRTVAKYREAMRIPSSVQRRRDKQSALGNVLSTAMSDRSRNPEPA</sequence>
<proteinExistence type="evidence at transcript level"/>
<comment type="function">
    <text>Sigma factors are initiation factors that promote the attachment of RNA polymerase to specific initiation sites and are then released. This sigma factor is responsible for the expression of the nitrogen fixation genes.</text>
</comment>
<comment type="induction">
    <text>Negatively autoregulated.</text>
</comment>
<comment type="similarity">
    <text evidence="3">Belongs to the sigma-54 factor family.</text>
</comment>
<organism>
    <name type="scientific">Bradyrhizobium diazoefficiens (strain JCM 10833 / BCRC 13528 / IAM 13628 / NBRC 14792 / USDA 110)</name>
    <dbReference type="NCBI Taxonomy" id="224911"/>
    <lineage>
        <taxon>Bacteria</taxon>
        <taxon>Pseudomonadati</taxon>
        <taxon>Pseudomonadota</taxon>
        <taxon>Alphaproteobacteria</taxon>
        <taxon>Hyphomicrobiales</taxon>
        <taxon>Nitrobacteraceae</taxon>
        <taxon>Bradyrhizobium</taxon>
    </lineage>
</organism>